<gene>
    <name type="ordered locus">At1g16350</name>
    <name type="ORF">F3O9.15</name>
</gene>
<feature type="initiator methionine" description="Removed" evidence="2">
    <location>
        <position position="1"/>
    </location>
</feature>
<feature type="chain" id="PRO_0000093687" description="Inosine-5'-monophosphate dehydrogenase 2">
    <location>
        <begin position="2"/>
        <end position="502"/>
    </location>
</feature>
<feature type="domain" description="CBS" evidence="1">
    <location>
        <begin position="166"/>
        <end position="225"/>
    </location>
</feature>
<feature type="active site" description="Thioimidate intermediate" evidence="1">
    <location>
        <position position="321"/>
    </location>
</feature>
<feature type="active site" description="Proton acceptor" evidence="1">
    <location>
        <position position="417"/>
    </location>
</feature>
<feature type="binding site" evidence="1">
    <location>
        <begin position="264"/>
        <end position="266"/>
    </location>
    <ligand>
        <name>NAD(+)</name>
        <dbReference type="ChEBI" id="CHEBI:57540"/>
    </ligand>
</feature>
<feature type="binding site" evidence="1">
    <location>
        <begin position="314"/>
        <end position="316"/>
    </location>
    <ligand>
        <name>NAD(+)</name>
        <dbReference type="ChEBI" id="CHEBI:57540"/>
    </ligand>
</feature>
<feature type="binding site" description="in other chain" evidence="1">
    <location>
        <position position="316"/>
    </location>
    <ligand>
        <name>K(+)</name>
        <dbReference type="ChEBI" id="CHEBI:29103"/>
        <note>ligand shared between two tetrameric partners</note>
    </ligand>
</feature>
<feature type="binding site" description="in other chain" evidence="1">
    <location>
        <position position="318"/>
    </location>
    <ligand>
        <name>K(+)</name>
        <dbReference type="ChEBI" id="CHEBI:29103"/>
        <note>ligand shared between two tetrameric partners</note>
    </ligand>
</feature>
<feature type="binding site" evidence="1">
    <location>
        <position position="319"/>
    </location>
    <ligand>
        <name>IMP</name>
        <dbReference type="ChEBI" id="CHEBI:58053"/>
    </ligand>
</feature>
<feature type="binding site" description="in other chain" evidence="1">
    <location>
        <position position="321"/>
    </location>
    <ligand>
        <name>K(+)</name>
        <dbReference type="ChEBI" id="CHEBI:29103"/>
        <note>ligand shared between two tetrameric partners</note>
    </ligand>
</feature>
<feature type="binding site" evidence="1">
    <location>
        <begin position="354"/>
        <end position="356"/>
    </location>
    <ligand>
        <name>IMP</name>
        <dbReference type="ChEBI" id="CHEBI:58053"/>
    </ligand>
</feature>
<feature type="binding site" evidence="1">
    <location>
        <begin position="377"/>
        <end position="378"/>
    </location>
    <ligand>
        <name>IMP</name>
        <dbReference type="ChEBI" id="CHEBI:58053"/>
    </ligand>
</feature>
<feature type="binding site" evidence="1">
    <location>
        <begin position="401"/>
        <end position="405"/>
    </location>
    <ligand>
        <name>IMP</name>
        <dbReference type="ChEBI" id="CHEBI:58053"/>
    </ligand>
</feature>
<feature type="binding site" evidence="1">
    <location>
        <position position="429"/>
    </location>
    <ligand>
        <name>IMP</name>
        <dbReference type="ChEBI" id="CHEBI:58053"/>
    </ligand>
</feature>
<feature type="binding site" evidence="1">
    <location>
        <position position="488"/>
    </location>
    <ligand>
        <name>K(+)</name>
        <dbReference type="ChEBI" id="CHEBI:29103"/>
        <note>ligand shared between two tetrameric partners</note>
    </ligand>
</feature>
<feature type="binding site" evidence="1">
    <location>
        <position position="489"/>
    </location>
    <ligand>
        <name>K(+)</name>
        <dbReference type="ChEBI" id="CHEBI:29103"/>
        <note>ligand shared between two tetrameric partners</note>
    </ligand>
</feature>
<feature type="binding site" evidence="1">
    <location>
        <position position="490"/>
    </location>
    <ligand>
        <name>K(+)</name>
        <dbReference type="ChEBI" id="CHEBI:29103"/>
        <note>ligand shared between two tetrameric partners</note>
    </ligand>
</feature>
<feature type="modified residue" description="N-acetylserine" evidence="2">
    <location>
        <position position="2"/>
    </location>
</feature>
<organism>
    <name type="scientific">Arabidopsis thaliana</name>
    <name type="common">Mouse-ear cress</name>
    <dbReference type="NCBI Taxonomy" id="3702"/>
    <lineage>
        <taxon>Eukaryota</taxon>
        <taxon>Viridiplantae</taxon>
        <taxon>Streptophyta</taxon>
        <taxon>Embryophyta</taxon>
        <taxon>Tracheophyta</taxon>
        <taxon>Spermatophyta</taxon>
        <taxon>Magnoliopsida</taxon>
        <taxon>eudicotyledons</taxon>
        <taxon>Gunneridae</taxon>
        <taxon>Pentapetalae</taxon>
        <taxon>rosids</taxon>
        <taxon>malvids</taxon>
        <taxon>Brassicales</taxon>
        <taxon>Brassicaceae</taxon>
        <taxon>Camelineae</taxon>
        <taxon>Arabidopsis</taxon>
    </lineage>
</organism>
<comment type="function">
    <text evidence="1">Catalyzes the conversion of inosine 5'-phosphate (IMP) to xanthosine 5'-phosphate (XMP), the first committed and rate-limiting step in the de novo synthesis of guanine nucleotides, and therefore plays an important role in the regulation of cell growth.</text>
</comment>
<comment type="catalytic activity">
    <reaction evidence="1">
        <text>IMP + NAD(+) + H2O = XMP + NADH + H(+)</text>
        <dbReference type="Rhea" id="RHEA:11708"/>
        <dbReference type="ChEBI" id="CHEBI:15377"/>
        <dbReference type="ChEBI" id="CHEBI:15378"/>
        <dbReference type="ChEBI" id="CHEBI:57464"/>
        <dbReference type="ChEBI" id="CHEBI:57540"/>
        <dbReference type="ChEBI" id="CHEBI:57945"/>
        <dbReference type="ChEBI" id="CHEBI:58053"/>
        <dbReference type="EC" id="1.1.1.205"/>
    </reaction>
</comment>
<comment type="cofactor">
    <cofactor evidence="1">
        <name>K(+)</name>
        <dbReference type="ChEBI" id="CHEBI:29103"/>
    </cofactor>
</comment>
<comment type="activity regulation">
    <text evidence="1">Mycophenolic acid (MPA) is a non-competitive inhibitor that prevents formation of the closed enzyme conformation by binding to the same site as the amobile flap. In contrast, mizoribine monophosphate (MZP) is a competitive inhibitor that induces the closed conformation. MPA is a potent inhibitor of mammalian IMPDHs but a poor inhibitor of the bacterial enzymes. MZP is a more potent inhibitor of bacterial IMPDH.</text>
</comment>
<comment type="pathway">
    <text evidence="1">Purine metabolism; XMP biosynthesis via de novo pathway; XMP from IMP: step 1/1.</text>
</comment>
<comment type="subunit">
    <text evidence="1">Homotetramer.</text>
</comment>
<comment type="subcellular location">
    <subcellularLocation>
        <location evidence="1">Cytoplasm</location>
    </subcellularLocation>
</comment>
<comment type="similarity">
    <text evidence="1">Belongs to the IMPDH/GMPR family.</text>
</comment>
<protein>
    <recommendedName>
        <fullName evidence="1">Inosine-5'-monophosphate dehydrogenase 2</fullName>
        <shortName evidence="1">IMP dehydrogenase 2</shortName>
        <shortName evidence="1">IMPD 2</shortName>
        <shortName evidence="1">IMPDH 2</shortName>
        <ecNumber evidence="1">1.1.1.205</ecNumber>
    </recommendedName>
</protein>
<name>IMDH2_ARATH</name>
<sequence length="502" mass="54051">MSGFEDGFSAEKLFSQGYSYTYDDVIFLPHFIDFSTDAVSLSTRLSKRVPLSIPCVASPMDTVSESHMAAAMAALGGIGIVHYNCDIDTQASVIRHAKSLQVPIASDAVFKCPEHQIGSVDDFGPSSFVFVSQTGTLTPKLLGYVSKSEWSSMKDDQKEVKIYDYMKSCENKDYYVPWDIDLDKIEAVLEDKQKGFVVLEKEGETVNVVTKDDVERVKGYPKLGSGTVGADKKWMVGAAIGTRESDKERLEHLVKAGANVVVLDSSQGNSIYQLEMIKYVKNTYPELDVVGGNVVTMYQAENLIKAGVDGLRVGMGSGSICTTQEVCAVGRGQATAVYKVSTLAAQHGVPVIADGGISNSGHIVKALVLGASTVMMGSFLAGSTEAPGAYEYRNGRRVKKYRGMGSLEAMTKGSDQRYLGDTAKLKIAQGVVGAVADKGSVLKFIPYTMHAVKQGFQDLGASSLQSAHELLRDNTLRLEARTGAAQIEGGIHGLVSYEKKSF</sequence>
<keyword id="KW-0007">Acetylation</keyword>
<keyword id="KW-0129">CBS domain</keyword>
<keyword id="KW-0963">Cytoplasm</keyword>
<keyword id="KW-0332">GMP biosynthesis</keyword>
<keyword id="KW-0479">Metal-binding</keyword>
<keyword id="KW-0520">NAD</keyword>
<keyword id="KW-0560">Oxidoreductase</keyword>
<keyword id="KW-0630">Potassium</keyword>
<keyword id="KW-0658">Purine biosynthesis</keyword>
<keyword id="KW-1185">Reference proteome</keyword>
<evidence type="ECO:0000255" key="1">
    <source>
        <dbReference type="HAMAP-Rule" id="MF_03156"/>
    </source>
</evidence>
<evidence type="ECO:0007744" key="2">
    <source>
    </source>
</evidence>
<proteinExistence type="evidence at protein level"/>
<accession>Q9SA34</accession>
<dbReference type="EC" id="1.1.1.205" evidence="1"/>
<dbReference type="EMBL" id="AC006341">
    <property type="protein sequence ID" value="AAD34687.1"/>
    <property type="molecule type" value="Genomic_DNA"/>
</dbReference>
<dbReference type="EMBL" id="CP002684">
    <property type="protein sequence ID" value="AEE29441.1"/>
    <property type="molecule type" value="Genomic_DNA"/>
</dbReference>
<dbReference type="PIR" id="F86298">
    <property type="entry name" value="F86298"/>
</dbReference>
<dbReference type="RefSeq" id="NP_173085.1">
    <property type="nucleotide sequence ID" value="NM_101501.3"/>
</dbReference>
<dbReference type="SMR" id="Q9SA34"/>
<dbReference type="BioGRID" id="23444">
    <property type="interactions" value="1"/>
</dbReference>
<dbReference type="FunCoup" id="Q9SA34">
    <property type="interactions" value="2762"/>
</dbReference>
<dbReference type="STRING" id="3702.Q9SA34"/>
<dbReference type="iPTMnet" id="Q9SA34"/>
<dbReference type="PaxDb" id="3702-AT1G16350.1"/>
<dbReference type="ProteomicsDB" id="248549"/>
<dbReference type="EnsemblPlants" id="AT1G16350.1">
    <property type="protein sequence ID" value="AT1G16350.1"/>
    <property type="gene ID" value="AT1G16350"/>
</dbReference>
<dbReference type="GeneID" id="838204"/>
<dbReference type="Gramene" id="AT1G16350.1">
    <property type="protein sequence ID" value="AT1G16350.1"/>
    <property type="gene ID" value="AT1G16350"/>
</dbReference>
<dbReference type="KEGG" id="ath:AT1G16350"/>
<dbReference type="Araport" id="AT1G16350"/>
<dbReference type="TAIR" id="AT1G16350"/>
<dbReference type="eggNOG" id="KOG2550">
    <property type="taxonomic scope" value="Eukaryota"/>
</dbReference>
<dbReference type="HOGENOM" id="CLU_022552_2_1_1"/>
<dbReference type="InParanoid" id="Q9SA34"/>
<dbReference type="OMA" id="MGYCGAK"/>
<dbReference type="OrthoDB" id="416622at2759"/>
<dbReference type="PhylomeDB" id="Q9SA34"/>
<dbReference type="BioCyc" id="ARA:AT1G16350-MONOMER"/>
<dbReference type="UniPathway" id="UPA00601">
    <property type="reaction ID" value="UER00295"/>
</dbReference>
<dbReference type="CD-CODE" id="4299E36E">
    <property type="entry name" value="Nucleolus"/>
</dbReference>
<dbReference type="PRO" id="PR:Q9SA34"/>
<dbReference type="Proteomes" id="UP000006548">
    <property type="component" value="Chromosome 1"/>
</dbReference>
<dbReference type="ExpressionAtlas" id="Q9SA34">
    <property type="expression patterns" value="baseline and differential"/>
</dbReference>
<dbReference type="GO" id="GO:0005829">
    <property type="term" value="C:cytosol"/>
    <property type="evidence" value="ECO:0007005"/>
    <property type="project" value="TAIR"/>
</dbReference>
<dbReference type="GO" id="GO:0005634">
    <property type="term" value="C:nucleus"/>
    <property type="evidence" value="ECO:0007005"/>
    <property type="project" value="TAIR"/>
</dbReference>
<dbReference type="GO" id="GO:0003938">
    <property type="term" value="F:IMP dehydrogenase activity"/>
    <property type="evidence" value="ECO:0007669"/>
    <property type="project" value="UniProtKB-UniRule"/>
</dbReference>
<dbReference type="GO" id="GO:0046872">
    <property type="term" value="F:metal ion binding"/>
    <property type="evidence" value="ECO:0007669"/>
    <property type="project" value="UniProtKB-UniRule"/>
</dbReference>
<dbReference type="GO" id="GO:0000166">
    <property type="term" value="F:nucleotide binding"/>
    <property type="evidence" value="ECO:0007669"/>
    <property type="project" value="UniProtKB-UniRule"/>
</dbReference>
<dbReference type="GO" id="GO:0006177">
    <property type="term" value="P:GMP biosynthetic process"/>
    <property type="evidence" value="ECO:0007669"/>
    <property type="project" value="UniProtKB-UniRule"/>
</dbReference>
<dbReference type="CDD" id="cd00381">
    <property type="entry name" value="IMPDH"/>
    <property type="match status" value="1"/>
</dbReference>
<dbReference type="FunFam" id="3.20.20.70:FF:000086">
    <property type="entry name" value="IMP dehydrogenase, putative"/>
    <property type="match status" value="1"/>
</dbReference>
<dbReference type="Gene3D" id="3.20.20.70">
    <property type="entry name" value="Aldolase class I"/>
    <property type="match status" value="1"/>
</dbReference>
<dbReference type="HAMAP" id="MF_01964">
    <property type="entry name" value="IMPDH"/>
    <property type="match status" value="1"/>
</dbReference>
<dbReference type="InterPro" id="IPR013785">
    <property type="entry name" value="Aldolase_TIM"/>
</dbReference>
<dbReference type="InterPro" id="IPR046342">
    <property type="entry name" value="CBS_dom_sf"/>
</dbReference>
<dbReference type="InterPro" id="IPR005990">
    <property type="entry name" value="IMP_DH"/>
</dbReference>
<dbReference type="InterPro" id="IPR015875">
    <property type="entry name" value="IMP_DH/GMP_Rdtase_CS"/>
</dbReference>
<dbReference type="InterPro" id="IPR001093">
    <property type="entry name" value="IMP_DH_GMPRt"/>
</dbReference>
<dbReference type="NCBIfam" id="TIGR01302">
    <property type="entry name" value="IMP_dehydrog"/>
    <property type="match status" value="1"/>
</dbReference>
<dbReference type="PANTHER" id="PTHR11911:SF111">
    <property type="entry name" value="INOSINE-5'-MONOPHOSPHATE DEHYDROGENASE"/>
    <property type="match status" value="1"/>
</dbReference>
<dbReference type="PANTHER" id="PTHR11911">
    <property type="entry name" value="INOSINE-5-MONOPHOSPHATE DEHYDROGENASE RELATED"/>
    <property type="match status" value="1"/>
</dbReference>
<dbReference type="Pfam" id="PF00478">
    <property type="entry name" value="IMPDH"/>
    <property type="match status" value="1"/>
</dbReference>
<dbReference type="PIRSF" id="PIRSF000130">
    <property type="entry name" value="IMPDH"/>
    <property type="match status" value="1"/>
</dbReference>
<dbReference type="SMART" id="SM01240">
    <property type="entry name" value="IMPDH"/>
    <property type="match status" value="1"/>
</dbReference>
<dbReference type="SUPFAM" id="SSF54631">
    <property type="entry name" value="CBS-domain pair"/>
    <property type="match status" value="1"/>
</dbReference>
<dbReference type="SUPFAM" id="SSF51412">
    <property type="entry name" value="Inosine monophosphate dehydrogenase (IMPDH)"/>
    <property type="match status" value="1"/>
</dbReference>
<dbReference type="PROSITE" id="PS00487">
    <property type="entry name" value="IMP_DH_GMP_RED"/>
    <property type="match status" value="1"/>
</dbReference>
<reference key="1">
    <citation type="journal article" date="2000" name="Nature">
        <title>Sequence and analysis of chromosome 1 of the plant Arabidopsis thaliana.</title>
        <authorList>
            <person name="Theologis A."/>
            <person name="Ecker J.R."/>
            <person name="Palm C.J."/>
            <person name="Federspiel N.A."/>
            <person name="Kaul S."/>
            <person name="White O."/>
            <person name="Alonso J."/>
            <person name="Altafi H."/>
            <person name="Araujo R."/>
            <person name="Bowman C.L."/>
            <person name="Brooks S.Y."/>
            <person name="Buehler E."/>
            <person name="Chan A."/>
            <person name="Chao Q."/>
            <person name="Chen H."/>
            <person name="Cheuk R.F."/>
            <person name="Chin C.W."/>
            <person name="Chung M.K."/>
            <person name="Conn L."/>
            <person name="Conway A.B."/>
            <person name="Conway A.R."/>
            <person name="Creasy T.H."/>
            <person name="Dewar K."/>
            <person name="Dunn P."/>
            <person name="Etgu P."/>
            <person name="Feldblyum T.V."/>
            <person name="Feng J.-D."/>
            <person name="Fong B."/>
            <person name="Fujii C.Y."/>
            <person name="Gill J.E."/>
            <person name="Goldsmith A.D."/>
            <person name="Haas B."/>
            <person name="Hansen N.F."/>
            <person name="Hughes B."/>
            <person name="Huizar L."/>
            <person name="Hunter J.L."/>
            <person name="Jenkins J."/>
            <person name="Johnson-Hopson C."/>
            <person name="Khan S."/>
            <person name="Khaykin E."/>
            <person name="Kim C.J."/>
            <person name="Koo H.L."/>
            <person name="Kremenetskaia I."/>
            <person name="Kurtz D.B."/>
            <person name="Kwan A."/>
            <person name="Lam B."/>
            <person name="Langin-Hooper S."/>
            <person name="Lee A."/>
            <person name="Lee J.M."/>
            <person name="Lenz C.A."/>
            <person name="Li J.H."/>
            <person name="Li Y.-P."/>
            <person name="Lin X."/>
            <person name="Liu S.X."/>
            <person name="Liu Z.A."/>
            <person name="Luros J.S."/>
            <person name="Maiti R."/>
            <person name="Marziali A."/>
            <person name="Militscher J."/>
            <person name="Miranda M."/>
            <person name="Nguyen M."/>
            <person name="Nierman W.C."/>
            <person name="Osborne B.I."/>
            <person name="Pai G."/>
            <person name="Peterson J."/>
            <person name="Pham P.K."/>
            <person name="Rizzo M."/>
            <person name="Rooney T."/>
            <person name="Rowley D."/>
            <person name="Sakano H."/>
            <person name="Salzberg S.L."/>
            <person name="Schwartz J.R."/>
            <person name="Shinn P."/>
            <person name="Southwick A.M."/>
            <person name="Sun H."/>
            <person name="Tallon L.J."/>
            <person name="Tambunga G."/>
            <person name="Toriumi M.J."/>
            <person name="Town C.D."/>
            <person name="Utterback T."/>
            <person name="Van Aken S."/>
            <person name="Vaysberg M."/>
            <person name="Vysotskaia V.S."/>
            <person name="Walker M."/>
            <person name="Wu D."/>
            <person name="Yu G."/>
            <person name="Fraser C.M."/>
            <person name="Venter J.C."/>
            <person name="Davis R.W."/>
        </authorList>
    </citation>
    <scope>NUCLEOTIDE SEQUENCE [LARGE SCALE GENOMIC DNA]</scope>
    <source>
        <strain>cv. Columbia</strain>
    </source>
</reference>
<reference key="2">
    <citation type="journal article" date="2017" name="Plant J.">
        <title>Araport11: a complete reannotation of the Arabidopsis thaliana reference genome.</title>
        <authorList>
            <person name="Cheng C.Y."/>
            <person name="Krishnakumar V."/>
            <person name="Chan A.P."/>
            <person name="Thibaud-Nissen F."/>
            <person name="Schobel S."/>
            <person name="Town C.D."/>
        </authorList>
    </citation>
    <scope>GENOME REANNOTATION</scope>
    <source>
        <strain>cv. Columbia</strain>
    </source>
</reference>
<reference key="3">
    <citation type="journal article" date="2012" name="Mol. Cell. Proteomics">
        <title>Comparative large-scale characterisation of plant vs. mammal proteins reveals similar and idiosyncratic N-alpha acetylation features.</title>
        <authorList>
            <person name="Bienvenut W.V."/>
            <person name="Sumpton D."/>
            <person name="Martinez A."/>
            <person name="Lilla S."/>
            <person name="Espagne C."/>
            <person name="Meinnel T."/>
            <person name="Giglione C."/>
        </authorList>
    </citation>
    <scope>ACETYLATION [LARGE SCALE ANALYSIS] AT SER-2</scope>
    <scope>CLEAVAGE OF INITIATOR METHIONINE [LARGE SCALE ANALYSIS]</scope>
    <scope>IDENTIFICATION BY MASS SPECTROMETRY [LARGE SCALE ANALYSIS]</scope>
</reference>